<organism>
    <name type="scientific">Penicillium aethiopicum</name>
    <dbReference type="NCBI Taxonomy" id="36650"/>
    <lineage>
        <taxon>Eukaryota</taxon>
        <taxon>Fungi</taxon>
        <taxon>Dikarya</taxon>
        <taxon>Ascomycota</taxon>
        <taxon>Pezizomycotina</taxon>
        <taxon>Eurotiomycetes</taxon>
        <taxon>Eurotiomycetidae</taxon>
        <taxon>Eurotiales</taxon>
        <taxon>Aspergillaceae</taxon>
        <taxon>Penicillium</taxon>
    </lineage>
</organism>
<feature type="chain" id="PRO_0000436823" description="Lactamase-like protein vrtG">
    <location>
        <begin position="1"/>
        <end position="307"/>
    </location>
</feature>
<feature type="active site" description="Proton donor/acceptor" evidence="2">
    <location>
        <position position="101"/>
    </location>
</feature>
<feature type="binding site" evidence="1">
    <location>
        <position position="97"/>
    </location>
    <ligand>
        <name>Zn(2+)</name>
        <dbReference type="ChEBI" id="CHEBI:29105"/>
        <label>1</label>
        <note>catalytic</note>
    </ligand>
</feature>
<feature type="binding site" evidence="1">
    <location>
        <position position="99"/>
    </location>
    <ligand>
        <name>Zn(2+)</name>
        <dbReference type="ChEBI" id="CHEBI:29105"/>
        <label>1</label>
        <note>catalytic</note>
    </ligand>
</feature>
<feature type="binding site" evidence="1">
    <location>
        <position position="101"/>
    </location>
    <ligand>
        <name>Zn(2+)</name>
        <dbReference type="ChEBI" id="CHEBI:29105"/>
        <label>2</label>
        <note>catalytic</note>
    </ligand>
</feature>
<feature type="binding site" evidence="1">
    <location>
        <position position="102"/>
    </location>
    <ligand>
        <name>Zn(2+)</name>
        <dbReference type="ChEBI" id="CHEBI:29105"/>
        <label>2</label>
        <note>catalytic</note>
    </ligand>
</feature>
<dbReference type="EC" id="3.1.-.-" evidence="9"/>
<dbReference type="EMBL" id="GU574477">
    <property type="protein sequence ID" value="ADI24932.1"/>
    <property type="molecule type" value="Genomic_DNA"/>
</dbReference>
<dbReference type="SMR" id="D7PHZ8"/>
<dbReference type="BioCyc" id="MetaCyc:MONOMER-19276"/>
<dbReference type="UniPathway" id="UPA00213"/>
<dbReference type="GO" id="GO:0016787">
    <property type="term" value="F:hydrolase activity"/>
    <property type="evidence" value="ECO:0007669"/>
    <property type="project" value="UniProtKB-KW"/>
</dbReference>
<dbReference type="GO" id="GO:0046872">
    <property type="term" value="F:metal ion binding"/>
    <property type="evidence" value="ECO:0007669"/>
    <property type="project" value="UniProtKB-KW"/>
</dbReference>
<dbReference type="GO" id="GO:0016114">
    <property type="term" value="P:terpenoid biosynthetic process"/>
    <property type="evidence" value="ECO:0007669"/>
    <property type="project" value="UniProtKB-UniPathway"/>
</dbReference>
<dbReference type="GO" id="GO:0140872">
    <property type="term" value="P:viridicatumtoxin biosynthetic process"/>
    <property type="evidence" value="ECO:0000304"/>
    <property type="project" value="GO_Central"/>
</dbReference>
<dbReference type="CDD" id="cd07722">
    <property type="entry name" value="LACTB2-like_MBL-fold"/>
    <property type="match status" value="1"/>
</dbReference>
<dbReference type="FunFam" id="3.60.15.10:FF:000041">
    <property type="entry name" value="Metallo-beta-lactamase domain protein"/>
    <property type="match status" value="1"/>
</dbReference>
<dbReference type="Gene3D" id="3.60.15.10">
    <property type="entry name" value="Ribonuclease Z/Hydroxyacylglutathione hydrolase-like"/>
    <property type="match status" value="1"/>
</dbReference>
<dbReference type="Gene3D" id="1.10.10.10">
    <property type="entry name" value="Winged helix-like DNA-binding domain superfamily/Winged helix DNA-binding domain"/>
    <property type="match status" value="1"/>
</dbReference>
<dbReference type="InterPro" id="IPR047921">
    <property type="entry name" value="LACTB2-like_MBL-fold"/>
</dbReference>
<dbReference type="InterPro" id="IPR001279">
    <property type="entry name" value="Metallo-B-lactamas"/>
</dbReference>
<dbReference type="InterPro" id="IPR036866">
    <property type="entry name" value="RibonucZ/Hydroxyglut_hydro"/>
</dbReference>
<dbReference type="InterPro" id="IPR050662">
    <property type="entry name" value="Sec-metab_biosynth-thioest"/>
</dbReference>
<dbReference type="InterPro" id="IPR036388">
    <property type="entry name" value="WH-like_DNA-bd_sf"/>
</dbReference>
<dbReference type="PANTHER" id="PTHR23131">
    <property type="entry name" value="ENDORIBONUCLEASE LACTB2"/>
    <property type="match status" value="1"/>
</dbReference>
<dbReference type="PANTHER" id="PTHR23131:SF2">
    <property type="entry name" value="LACTAMASE-LIKE PROTEIN APTB-RELATED"/>
    <property type="match status" value="1"/>
</dbReference>
<dbReference type="Pfam" id="PF00753">
    <property type="entry name" value="Lactamase_B"/>
    <property type="match status" value="1"/>
</dbReference>
<dbReference type="SMART" id="SM00849">
    <property type="entry name" value="Lactamase_B"/>
    <property type="match status" value="1"/>
</dbReference>
<dbReference type="SUPFAM" id="SSF56281">
    <property type="entry name" value="Metallo-hydrolase/oxidoreductase"/>
    <property type="match status" value="1"/>
</dbReference>
<accession>D7PHZ8</accession>
<gene>
    <name evidence="7" type="primary">vrtG</name>
</gene>
<sequence>MATRIPFDESYWEEYLSGQEASLPALPAVTQLSPRVTRLLAGNPGIMQLQGTNTYLVGTGPARILIDTGEGRPVWHATLAEHLRTHHLTLEYILLTHWHGDHTGGIPDLIAHDPTLQSRIYKHHPDRGQRPIRDGQRFTVTGATVRAVFTPGHAIDHMCFLIEEEKALLTGDNVLGHGFAIVQDLAEYMASLARMAALGCERGYPAHGAVIENLPAKMQLYIHHNEVRVQQVITALASVVKLPGKRVGMTVPEIGRAIYGEVPREIVENAIVPFLSQVLWKLAEDRKVGFEPGEANKRRWFGLVTQQ</sequence>
<comment type="function">
    <text evidence="4 5">Lactamase-like protein; part of the gene cluster that mediates the biosynthesis of viridicatumtoxin, a tetracycline-like fungal meroterpenoid with a unique, fused spirobicyclic ring system (PubMed:20534346). The first step of the pathway is the production of the malonamoyl-CoA starter unit for the polyketide synthase vrtA (PubMed:20534346). The aldolase vrtJ may be involved in the synthesis of the malonamate substrate for malonamoyl-CoA synthetase vrtB (PubMed:20534346). The polyketide synthase vrtA then may utilize the malonamoyl-CoA starter unit, followed by sequential condensation of eight malonyl-CoA units to form the polyketide backbone (PubMed:20534346). The cyclization of the last ring could be mediated by the lactamase-like protein vrtG (PubMed:20534346). The proposed post-PKS tailoring steps are a hydroxylation at C5 catalyzed the cytochrome P450 monooxygenase vrtE, a hydroxylation at C12a catalyzed by VrtH and/or VrtI, and an O-methylation by the O-methyltransferase vrtF (PubMed:20534346, PubMed:24161266). VrtC is then proposed to catalyze the transfer of a geranyl group synthesized by vrtD to the aromatic C ring of the tetracyclic polyketide intermediate of viridicatumtoxin to yield previridicatumtoxin (PubMed:20534346). Finally, the cytochrome P450 monooxygenase vrtK catalyzes the spirocyclization of the geranyl moiety of previridicatumtoxin to afford viridicatumtoxin (PubMed:24161266).</text>
</comment>
<comment type="cofactor">
    <cofactor evidence="1">
        <name>Zn(2+)</name>
        <dbReference type="ChEBI" id="CHEBI:29105"/>
    </cofactor>
    <text evidence="1">Binds 2 Zn(2+) ions per subunit.</text>
</comment>
<comment type="pathway">
    <text evidence="4">Secondary metabolite biosynthesis; terpenoid biosynthesis.</text>
</comment>
<comment type="biotechnology">
    <text evidence="3 6">Viridicatumtoxin and its derivative, viridicatumtoxin B, exhibit anti-methicillin-resistant Staphylococcus aureus (anti-MRSA) activity (PubMed:19168978). Moreover, viridicatumtoxin and a C2 acetyl analog, spirohexaline, have been demonstrated to inhibit bacterial undecaprenyl diphosphate synthase, a potential new target for antibiotic development (PubMed:27049441).</text>
</comment>
<comment type="similarity">
    <text evidence="8">Belongs to the metallo-beta-lactamase superfamily.</text>
</comment>
<evidence type="ECO:0000250" key="1">
    <source>
        <dbReference type="UniProtKB" id="Q988B9"/>
    </source>
</evidence>
<evidence type="ECO:0000255" key="2"/>
<evidence type="ECO:0000269" key="3">
    <source>
    </source>
</evidence>
<evidence type="ECO:0000269" key="4">
    <source>
    </source>
</evidence>
<evidence type="ECO:0000269" key="5">
    <source>
    </source>
</evidence>
<evidence type="ECO:0000269" key="6">
    <source>
    </source>
</evidence>
<evidence type="ECO:0000303" key="7">
    <source>
    </source>
</evidence>
<evidence type="ECO:0000305" key="8"/>
<evidence type="ECO:0000305" key="9">
    <source>
    </source>
</evidence>
<proteinExistence type="evidence at protein level"/>
<protein>
    <recommendedName>
        <fullName evidence="7">Lactamase-like protein vrtG</fullName>
        <ecNumber evidence="9">3.1.-.-</ecNumber>
    </recommendedName>
    <alternativeName>
        <fullName evidence="7">Viridicatumtoxin synthesis protein G</fullName>
    </alternativeName>
</protein>
<name>VRTG_PENAE</name>
<reference key="1">
    <citation type="journal article" date="2010" name="Chem. Biol.">
        <title>Identification of the viridicatumtoxin and griseofulvin gene clusters from Penicillium aethiopicum.</title>
        <authorList>
            <person name="Chooi Y.H."/>
            <person name="Cacho R."/>
            <person name="Tang Y."/>
        </authorList>
    </citation>
    <scope>NUCLEOTIDE SEQUENCE [GENOMIC DNA]</scope>
    <scope>FUNCTION</scope>
    <source>
        <strain>IBT 5753</strain>
    </source>
</reference>
<reference key="2">
    <citation type="journal article" date="2008" name="J. Antibiot.">
        <title>Viridicatumtoxin B, a new anti-MRSA agent from Penicillium sp. FR11.</title>
        <authorList>
            <person name="Zheng C.J."/>
            <person name="Yu H.E."/>
            <person name="Kim E.H."/>
            <person name="Kim W.G."/>
        </authorList>
    </citation>
    <scope>BIOTECHNOLOGY</scope>
</reference>
<reference key="3">
    <citation type="journal article" date="2013" name="J. Am. Chem. Soc.">
        <title>A cytochrome P450 serves as an unexpected terpene cyclase during fungal meroterpenoid biosynthesis.</title>
        <authorList>
            <person name="Chooi Y.H."/>
            <person name="Hong Y.J."/>
            <person name="Cacho R.A."/>
            <person name="Tantillo D.J."/>
            <person name="Tang Y."/>
        </authorList>
    </citation>
    <scope>FUNCTION</scope>
</reference>
<reference key="4">
    <citation type="journal article" date="2016" name="J. Antibiot.">
        <title>Inhibition of bacterial undecaprenyl pyrophosphate synthase by small fungal molecules.</title>
        <authorList>
            <person name="Inokoshi J."/>
            <person name="Nakamura Y."/>
            <person name="Komada S."/>
            <person name="Komatsu K."/>
            <person name="Umeyama H."/>
            <person name="Tomoda H."/>
        </authorList>
    </citation>
    <scope>BIOTECHNOLOGY</scope>
</reference>
<keyword id="KW-0378">Hydrolase</keyword>
<keyword id="KW-0479">Metal-binding</keyword>
<keyword id="KW-0862">Zinc</keyword>